<name>PG197_VACCW</name>
<keyword id="KW-1185">Reference proteome</keyword>
<organismHost>
    <name type="scientific">Bos taurus</name>
    <name type="common">Bovine</name>
    <dbReference type="NCBI Taxonomy" id="9913"/>
</organismHost>
<comment type="induction">
    <text>Expressed in the early phase of the viral replicative cycle.</text>
</comment>
<comment type="similarity">
    <text evidence="1">Belongs to the orthopoxvirus OPG197 family.</text>
</comment>
<dbReference type="EMBL" id="D11079">
    <property type="protein sequence ID" value="BAA01841.1"/>
    <property type="molecule type" value="Genomic_DNA"/>
</dbReference>
<dbReference type="EMBL" id="AY243312">
    <property type="protein sequence ID" value="AAO89472.1"/>
    <property type="molecule type" value="Genomic_DNA"/>
</dbReference>
<dbReference type="PIR" id="JQ1805">
    <property type="entry name" value="JQ1805"/>
</dbReference>
<dbReference type="RefSeq" id="YP_233075.1">
    <property type="nucleotide sequence ID" value="NC_006998.1"/>
</dbReference>
<dbReference type="SMR" id="Q01229"/>
<dbReference type="DNASU" id="3707664"/>
<dbReference type="GeneID" id="3707664"/>
<dbReference type="KEGG" id="vg:3707664"/>
<dbReference type="Proteomes" id="UP000000344">
    <property type="component" value="Genome"/>
</dbReference>
<dbReference type="InterPro" id="IPR009754">
    <property type="entry name" value="Orthopox_B11R"/>
</dbReference>
<dbReference type="Pfam" id="PF07033">
    <property type="entry name" value="Orthopox_B11R"/>
    <property type="match status" value="1"/>
</dbReference>
<organism>
    <name type="scientific">Vaccinia virus (strain Western Reserve)</name>
    <name type="common">VACV</name>
    <name type="synonym">Vaccinia virus (strain WR)</name>
    <dbReference type="NCBI Taxonomy" id="10254"/>
    <lineage>
        <taxon>Viruses</taxon>
        <taxon>Varidnaviria</taxon>
        <taxon>Bamfordvirae</taxon>
        <taxon>Nucleocytoviricota</taxon>
        <taxon>Pokkesviricetes</taxon>
        <taxon>Chitovirales</taxon>
        <taxon>Poxviridae</taxon>
        <taxon>Chordopoxvirinae</taxon>
        <taxon>Orthopoxvirus</taxon>
        <taxon>Vaccinia virus</taxon>
    </lineage>
</organism>
<sequence length="72" mass="8184">MDTDVTNVEDIINEIDREKEEILKNVEIENNKNINKNHPSGYIREALVINTSSNSDSIDKEVIECICHDVGI</sequence>
<evidence type="ECO:0000305" key="1"/>
<accession>Q01229</accession>
<accession>Q76ZL2</accession>
<protein>
    <recommendedName>
        <fullName>Protein OPG197</fullName>
    </recommendedName>
</protein>
<gene>
    <name type="primary">OPG197</name>
    <name type="ordered locus">VACWR193</name>
    <name type="ORF">B11R</name>
</gene>
<proteinExistence type="evidence at transcript level"/>
<feature type="chain" id="PRO_0000099363" description="Protein OPG197">
    <location>
        <begin position="1"/>
        <end position="72"/>
    </location>
</feature>
<reference key="1">
    <citation type="journal article" date="1991" name="J. Gen. Virol.">
        <title>Nucleotide sequence of 42 kbp of vaccinia virus strain WR from near the right inverted terminal repeat.</title>
        <authorList>
            <person name="Smith G.L."/>
            <person name="Chan Y.S."/>
            <person name="Howard S.T."/>
        </authorList>
    </citation>
    <scope>NUCLEOTIDE SEQUENCE [GENOMIC DNA]</scope>
</reference>
<reference key="2">
    <citation type="submission" date="2003-02" db="EMBL/GenBank/DDBJ databases">
        <title>Sequencing of the coding region of Vaccinia-WR to an average 9-fold redundancy and an error rate of 0.16/10kb.</title>
        <authorList>
            <person name="Esposito J.J."/>
            <person name="Frace A.M."/>
            <person name="Sammons S.A."/>
            <person name="Olsen-Rasmussen M."/>
            <person name="Osborne J."/>
            <person name="Wohlhueter R."/>
        </authorList>
    </citation>
    <scope>NUCLEOTIDE SEQUENCE [LARGE SCALE GENOMIC DNA]</scope>
</reference>